<name>APT_METFK</name>
<evidence type="ECO:0000255" key="1">
    <source>
        <dbReference type="HAMAP-Rule" id="MF_00004"/>
    </source>
</evidence>
<protein>
    <recommendedName>
        <fullName evidence="1">Adenine phosphoribosyltransferase</fullName>
        <shortName evidence="1">APRT</shortName>
        <ecNumber evidence="1">2.4.2.7</ecNumber>
    </recommendedName>
</protein>
<organism>
    <name type="scientific">Methylobacillus flagellatus (strain ATCC 51484 / DSM 6875 / VKM B-1610 / KT)</name>
    <dbReference type="NCBI Taxonomy" id="265072"/>
    <lineage>
        <taxon>Bacteria</taxon>
        <taxon>Pseudomonadati</taxon>
        <taxon>Pseudomonadota</taxon>
        <taxon>Betaproteobacteria</taxon>
        <taxon>Nitrosomonadales</taxon>
        <taxon>Methylophilaceae</taxon>
        <taxon>Methylobacillus</taxon>
    </lineage>
</organism>
<keyword id="KW-0963">Cytoplasm</keyword>
<keyword id="KW-0328">Glycosyltransferase</keyword>
<keyword id="KW-0660">Purine salvage</keyword>
<keyword id="KW-1185">Reference proteome</keyword>
<keyword id="KW-0808">Transferase</keyword>
<accession>Q1GYN9</accession>
<reference key="1">
    <citation type="submission" date="2006-03" db="EMBL/GenBank/DDBJ databases">
        <title>Complete sequence of Methylobacillus flagellatus KT.</title>
        <authorList>
            <consortium name="US DOE Joint Genome Institute"/>
            <person name="Copeland A."/>
            <person name="Lucas S."/>
            <person name="Lapidus A."/>
            <person name="Barry K."/>
            <person name="Detter J.C."/>
            <person name="Glavina del Rio T."/>
            <person name="Hammon N."/>
            <person name="Israni S."/>
            <person name="Dalin E."/>
            <person name="Tice H."/>
            <person name="Pitluck S."/>
            <person name="Brettin T."/>
            <person name="Bruce D."/>
            <person name="Han C."/>
            <person name="Tapia R."/>
            <person name="Saunders E."/>
            <person name="Gilna P."/>
            <person name="Schmutz J."/>
            <person name="Larimer F."/>
            <person name="Land M."/>
            <person name="Kyrpides N."/>
            <person name="Anderson I."/>
            <person name="Richardson P."/>
        </authorList>
    </citation>
    <scope>NUCLEOTIDE SEQUENCE [LARGE SCALE GENOMIC DNA]</scope>
    <source>
        <strain>ATCC 51484 / DSM 6875 / VKM B-1610 / KT</strain>
    </source>
</reference>
<dbReference type="EC" id="2.4.2.7" evidence="1"/>
<dbReference type="EMBL" id="CP000284">
    <property type="protein sequence ID" value="ABE50648.1"/>
    <property type="molecule type" value="Genomic_DNA"/>
</dbReference>
<dbReference type="RefSeq" id="WP_011480601.1">
    <property type="nucleotide sequence ID" value="NC_007947.1"/>
</dbReference>
<dbReference type="SMR" id="Q1GYN9"/>
<dbReference type="STRING" id="265072.Mfla_2383"/>
<dbReference type="KEGG" id="mfa:Mfla_2383"/>
<dbReference type="eggNOG" id="COG0503">
    <property type="taxonomic scope" value="Bacteria"/>
</dbReference>
<dbReference type="HOGENOM" id="CLU_063339_3_0_4"/>
<dbReference type="OrthoDB" id="9803963at2"/>
<dbReference type="UniPathway" id="UPA00588">
    <property type="reaction ID" value="UER00646"/>
</dbReference>
<dbReference type="Proteomes" id="UP000002440">
    <property type="component" value="Chromosome"/>
</dbReference>
<dbReference type="GO" id="GO:0005737">
    <property type="term" value="C:cytoplasm"/>
    <property type="evidence" value="ECO:0007669"/>
    <property type="project" value="UniProtKB-SubCell"/>
</dbReference>
<dbReference type="GO" id="GO:0003999">
    <property type="term" value="F:adenine phosphoribosyltransferase activity"/>
    <property type="evidence" value="ECO:0007669"/>
    <property type="project" value="UniProtKB-UniRule"/>
</dbReference>
<dbReference type="GO" id="GO:0006168">
    <property type="term" value="P:adenine salvage"/>
    <property type="evidence" value="ECO:0007669"/>
    <property type="project" value="InterPro"/>
</dbReference>
<dbReference type="GO" id="GO:0044209">
    <property type="term" value="P:AMP salvage"/>
    <property type="evidence" value="ECO:0007669"/>
    <property type="project" value="UniProtKB-UniRule"/>
</dbReference>
<dbReference type="GO" id="GO:0006166">
    <property type="term" value="P:purine ribonucleoside salvage"/>
    <property type="evidence" value="ECO:0007669"/>
    <property type="project" value="UniProtKB-KW"/>
</dbReference>
<dbReference type="CDD" id="cd06223">
    <property type="entry name" value="PRTases_typeI"/>
    <property type="match status" value="1"/>
</dbReference>
<dbReference type="FunFam" id="3.40.50.2020:FF:000021">
    <property type="entry name" value="Adenine phosphoribosyltransferase"/>
    <property type="match status" value="1"/>
</dbReference>
<dbReference type="Gene3D" id="3.40.50.2020">
    <property type="match status" value="1"/>
</dbReference>
<dbReference type="HAMAP" id="MF_00004">
    <property type="entry name" value="Aden_phosphoribosyltr"/>
    <property type="match status" value="1"/>
</dbReference>
<dbReference type="InterPro" id="IPR005764">
    <property type="entry name" value="Ade_phspho_trans"/>
</dbReference>
<dbReference type="InterPro" id="IPR050120">
    <property type="entry name" value="Adenine_PRTase"/>
</dbReference>
<dbReference type="InterPro" id="IPR000836">
    <property type="entry name" value="PRibTrfase_dom"/>
</dbReference>
<dbReference type="InterPro" id="IPR029057">
    <property type="entry name" value="PRTase-like"/>
</dbReference>
<dbReference type="NCBIfam" id="TIGR01090">
    <property type="entry name" value="apt"/>
    <property type="match status" value="1"/>
</dbReference>
<dbReference type="NCBIfam" id="NF002634">
    <property type="entry name" value="PRK02304.1-3"/>
    <property type="match status" value="1"/>
</dbReference>
<dbReference type="NCBIfam" id="NF002636">
    <property type="entry name" value="PRK02304.1-5"/>
    <property type="match status" value="1"/>
</dbReference>
<dbReference type="PANTHER" id="PTHR11776">
    <property type="entry name" value="ADENINE PHOSPHORIBOSYLTRANSFERASE"/>
    <property type="match status" value="1"/>
</dbReference>
<dbReference type="PANTHER" id="PTHR11776:SF7">
    <property type="entry name" value="PHOSPHORIBOSYLTRANSFERASE DOMAIN-CONTAINING PROTEIN"/>
    <property type="match status" value="1"/>
</dbReference>
<dbReference type="Pfam" id="PF00156">
    <property type="entry name" value="Pribosyltran"/>
    <property type="match status" value="1"/>
</dbReference>
<dbReference type="SUPFAM" id="SSF53271">
    <property type="entry name" value="PRTase-like"/>
    <property type="match status" value="1"/>
</dbReference>
<dbReference type="PROSITE" id="PS00103">
    <property type="entry name" value="PUR_PYR_PR_TRANSFER"/>
    <property type="match status" value="1"/>
</dbReference>
<gene>
    <name evidence="1" type="primary">apt</name>
    <name type="ordered locus">Mfla_2383</name>
</gene>
<feature type="chain" id="PRO_1000000306" description="Adenine phosphoribosyltransferase">
    <location>
        <begin position="1"/>
        <end position="176"/>
    </location>
</feature>
<sequence length="176" mass="18992">MNIKSLIRTIPDYPKPGIQFRDITTLLKDASGLRQVVDALVERYAGAKVDKVVGIESRGFIVGAAVAYELGVGFVPVRKKGKLPGDVLGHDYALEYGTDRVEIHSDAISPDEHVLLLDDLIATGGTAEAAAILIEKLGGHVLECAFIIGLPDLGGERKLRVLGYKTFSLCQFEDSE</sequence>
<comment type="function">
    <text evidence="1">Catalyzes a salvage reaction resulting in the formation of AMP, that is energically less costly than de novo synthesis.</text>
</comment>
<comment type="catalytic activity">
    <reaction evidence="1">
        <text>AMP + diphosphate = 5-phospho-alpha-D-ribose 1-diphosphate + adenine</text>
        <dbReference type="Rhea" id="RHEA:16609"/>
        <dbReference type="ChEBI" id="CHEBI:16708"/>
        <dbReference type="ChEBI" id="CHEBI:33019"/>
        <dbReference type="ChEBI" id="CHEBI:58017"/>
        <dbReference type="ChEBI" id="CHEBI:456215"/>
        <dbReference type="EC" id="2.4.2.7"/>
    </reaction>
</comment>
<comment type="pathway">
    <text evidence="1">Purine metabolism; AMP biosynthesis via salvage pathway; AMP from adenine: step 1/1.</text>
</comment>
<comment type="subunit">
    <text evidence="1">Homodimer.</text>
</comment>
<comment type="subcellular location">
    <subcellularLocation>
        <location evidence="1">Cytoplasm</location>
    </subcellularLocation>
</comment>
<comment type="similarity">
    <text evidence="1">Belongs to the purine/pyrimidine phosphoribosyltransferase family.</text>
</comment>
<proteinExistence type="inferred from homology"/>